<keyword id="KW-0378">Hydrolase</keyword>
<keyword id="KW-0574">Periplasm</keyword>
<keyword id="KW-0732">Signal</keyword>
<sequence length="248" mass="27044">MKKLLAVFCAGAFVSTSVFAAIPPGNDVTTKPDLYYLKNSQAIDSLALLPPPPEVGSILFLNDQAMYEKGRLLRNTERGEQAAKDADLAAGGVANAFSEAFGYPITEKDAPEIHKLLTNMIEDAGDLATRSAKEKYMRIRPFAFYGVATCNTKDQDKLSKNGSYPSGHTAIGWASALVLSEINPENQDKILKRGYELGQSRVICGYHWQSDVDAARIVASGAVATLHSNPEFQKQLQKAKDEFAKLKK</sequence>
<proteinExistence type="inferred from homology"/>
<dbReference type="EC" id="3.1.3.2"/>
<dbReference type="EMBL" id="X64820">
    <property type="protein sequence ID" value="CAA46032.1"/>
    <property type="molecule type" value="Genomic_DNA"/>
</dbReference>
<dbReference type="PIR" id="S19888">
    <property type="entry name" value="PAOFCS"/>
</dbReference>
<dbReference type="SMR" id="P26975"/>
<dbReference type="STRING" id="588.BGK56_18655"/>
<dbReference type="GO" id="GO:0030288">
    <property type="term" value="C:outer membrane-bounded periplasmic space"/>
    <property type="evidence" value="ECO:0007669"/>
    <property type="project" value="InterPro"/>
</dbReference>
<dbReference type="GO" id="GO:0003993">
    <property type="term" value="F:acid phosphatase activity"/>
    <property type="evidence" value="ECO:0007669"/>
    <property type="project" value="UniProtKB-EC"/>
</dbReference>
<dbReference type="CDD" id="cd03397">
    <property type="entry name" value="PAP2_acid_phosphatase"/>
    <property type="match status" value="1"/>
</dbReference>
<dbReference type="Gene3D" id="1.20.144.10">
    <property type="entry name" value="Phosphatidic acid phosphatase type 2/haloperoxidase"/>
    <property type="match status" value="1"/>
</dbReference>
<dbReference type="InterPro" id="IPR001011">
    <property type="entry name" value="Acid_Pase_classA_bac"/>
</dbReference>
<dbReference type="InterPro" id="IPR018296">
    <property type="entry name" value="Acid_Pase_classA_bac_CS"/>
</dbReference>
<dbReference type="InterPro" id="IPR054904">
    <property type="entry name" value="Acid_Phosphatase_PhoC"/>
</dbReference>
<dbReference type="InterPro" id="IPR036938">
    <property type="entry name" value="P_Acid_Pase_2/haloperoxi_sf"/>
</dbReference>
<dbReference type="InterPro" id="IPR000326">
    <property type="entry name" value="P_Acid_Pase_2/haloperoxidase"/>
</dbReference>
<dbReference type="NCBIfam" id="NF045654">
    <property type="entry name" value="APhasePhoC"/>
    <property type="match status" value="1"/>
</dbReference>
<dbReference type="Pfam" id="PF01569">
    <property type="entry name" value="PAP2"/>
    <property type="match status" value="1"/>
</dbReference>
<dbReference type="PIRSF" id="PIRSF000897">
    <property type="entry name" value="Acid_Ptase_ClsA"/>
    <property type="match status" value="1"/>
</dbReference>
<dbReference type="PRINTS" id="PR00483">
    <property type="entry name" value="BACPHPHTASE"/>
</dbReference>
<dbReference type="SMART" id="SM00014">
    <property type="entry name" value="acidPPc"/>
    <property type="match status" value="1"/>
</dbReference>
<dbReference type="SUPFAM" id="SSF48317">
    <property type="entry name" value="Acid phosphatase/Vanadium-dependent haloperoxidase"/>
    <property type="match status" value="1"/>
</dbReference>
<dbReference type="PROSITE" id="PS01157">
    <property type="entry name" value="ACID_PHOSPH_CL_A"/>
    <property type="match status" value="1"/>
</dbReference>
<name>PHON_PROST</name>
<organism>
    <name type="scientific">Providencia stuartii</name>
    <dbReference type="NCBI Taxonomy" id="588"/>
    <lineage>
        <taxon>Bacteria</taxon>
        <taxon>Pseudomonadati</taxon>
        <taxon>Pseudomonadota</taxon>
        <taxon>Gammaproteobacteria</taxon>
        <taxon>Enterobacterales</taxon>
        <taxon>Morganellaceae</taxon>
        <taxon>Providencia</taxon>
    </lineage>
</organism>
<reference key="1">
    <citation type="submission" date="1992-02" db="EMBL/GenBank/DDBJ databases">
        <authorList>
            <person name="Riccio M.L."/>
            <person name="Lombardi G."/>
            <person name="Chiesurin A."/>
            <person name="Satta G."/>
        </authorList>
    </citation>
    <scope>NUCLEOTIDE SEQUENCE [GENOMIC DNA]</scope>
    <source>
        <strain>PV81</strain>
    </source>
</reference>
<protein>
    <recommendedName>
        <fullName>Non-specific acid phosphatase</fullName>
        <shortName>NSAP</shortName>
        <ecNumber>3.1.3.2</ecNumber>
    </recommendedName>
</protein>
<accession>P26975</accession>
<comment type="catalytic activity">
    <reaction>
        <text>a phosphate monoester + H2O = an alcohol + phosphate</text>
        <dbReference type="Rhea" id="RHEA:15017"/>
        <dbReference type="ChEBI" id="CHEBI:15377"/>
        <dbReference type="ChEBI" id="CHEBI:30879"/>
        <dbReference type="ChEBI" id="CHEBI:43474"/>
        <dbReference type="ChEBI" id="CHEBI:67140"/>
        <dbReference type="EC" id="3.1.3.2"/>
    </reaction>
</comment>
<comment type="subcellular location">
    <subcellularLocation>
        <location>Periplasm</location>
    </subcellularLocation>
</comment>
<comment type="similarity">
    <text evidence="2">Belongs to the class A bacterial acid phosphatase family.</text>
</comment>
<evidence type="ECO:0000255" key="1"/>
<evidence type="ECO:0000305" key="2"/>
<feature type="signal peptide" evidence="1">
    <location>
        <begin position="1"/>
        <end position="20"/>
    </location>
</feature>
<feature type="chain" id="PRO_0000024000" description="Non-specific acid phosphatase">
    <location>
        <begin position="21"/>
        <end position="248"/>
    </location>
</feature>
<gene>
    <name type="primary">phoN</name>
</gene>